<organism>
    <name type="scientific">Mus musculus</name>
    <name type="common">Mouse</name>
    <dbReference type="NCBI Taxonomy" id="10090"/>
    <lineage>
        <taxon>Eukaryota</taxon>
        <taxon>Metazoa</taxon>
        <taxon>Chordata</taxon>
        <taxon>Craniata</taxon>
        <taxon>Vertebrata</taxon>
        <taxon>Euteleostomi</taxon>
        <taxon>Mammalia</taxon>
        <taxon>Eutheria</taxon>
        <taxon>Euarchontoglires</taxon>
        <taxon>Glires</taxon>
        <taxon>Rodentia</taxon>
        <taxon>Myomorpha</taxon>
        <taxon>Muroidea</taxon>
        <taxon>Muridae</taxon>
        <taxon>Murinae</taxon>
        <taxon>Mus</taxon>
        <taxon>Mus</taxon>
    </lineage>
</organism>
<keyword id="KW-1003">Cell membrane</keyword>
<keyword id="KW-1015">Disulfide bond</keyword>
<keyword id="KW-0297">G-protein coupled receptor</keyword>
<keyword id="KW-0472">Membrane</keyword>
<keyword id="KW-0675">Receptor</keyword>
<keyword id="KW-1185">Reference proteome</keyword>
<keyword id="KW-0807">Transducer</keyword>
<keyword id="KW-0812">Transmembrane</keyword>
<keyword id="KW-1133">Transmembrane helix</keyword>
<protein>
    <recommendedName>
        <fullName>C-C chemokine receptor type 1</fullName>
        <shortName>C-C CKR-1</shortName>
        <shortName>CC-CKR-1</shortName>
        <shortName>CCR-1</shortName>
        <shortName>CCR1</shortName>
    </recommendedName>
    <alternativeName>
        <fullName>Macrophage inflammatory protein 1-alpha receptor</fullName>
        <shortName>MIP-1alpha-R</shortName>
    </alternativeName>
    <alternativeName>
        <fullName>RANTES-R</fullName>
    </alternativeName>
    <cdAntigenName>CD191</cdAntigenName>
</protein>
<name>CCR1_MOUSE</name>
<sequence>MEISDFTEAYPTTTEFDYGDSTPCQKTAVRAFGAGLLPPLYSLVFIIGVVGNVLVILVLMQHRRLQSMTSIYLFNLAVSDLVFLFTLPFWIDYKLKDDWIFGDAMCKLLSGFYYLGLYSEIFFIILLTIDRYLAIVHAVFALRARTVTFGIITSIITWALAILASMPALYFFKAQWEFTHRTCSPHFPYKSLKQWKRFQALKLNLLGLILPLLVMIICYAGIIRILLRRPSEKKVKAVRLIFAITLLFFLLWTPYNLSVFVSAFQDVLFTNQCEQSKQLDLAMQVTEVIAYTHCCVNPIIYVFVGERFWKYLRQLFQRHVAIPLAKWLPFLSVDQLERTSSISPSTGEHELSAGF</sequence>
<comment type="function">
    <text evidence="1 4 5 6">Chemokine receptor that plays a crucial role in regulating immune cell migration, inflammation, and immune responses (PubMed:9166425). Contributes to the inflammatory response by recruiting immune cells, such as monocytes, macrophages, T-cells, and dendritic cells, to sites of inflammation for the clearance of pathogens and the resolution of tissue damage. When activated by its ligands including CCL3, CCL5-9, CCL13-16 and CCL23, triggers a signaling cascade within immune cells, leading to their migration towards the source of the chemokine (By similarity). For example, mediates neutrophil migration after activation by CCL3 leading to the sequential release of TNF-alpha and leukotriene B4 (PubMed:15831559). Also mediates monocyte migration upon CXCL4 binding (By similarity). Activation by CCL5 results in neuroinflammation through the ERK1/2 signaling pathway (PubMed:31898284).</text>
</comment>
<comment type="subunit">
    <text evidence="1">Interacts with CREB3. Interacts with CCL3. Interacts with CCL15. Interacts with CCL23. Interacts with GNAI1. Interacts with PF4/CXCL4.</text>
</comment>
<comment type="subcellular location">
    <subcellularLocation>
        <location evidence="1">Cell membrane</location>
        <topology evidence="1">Multi-pass membrane protein</topology>
    </subcellularLocation>
</comment>
<comment type="tissue specificity">
    <text>Detected in the heart, spleen, lung, peritoneal exudate cells and leukocytes.</text>
</comment>
<comment type="disruption phenotype">
    <text evidence="6">Deletion mice are viable and fertile, and exhibit normal growth, development, anatomy and behavior compared to wild-type littermates. However, mature neutrophils from mutant mice fail to chemotax in vitro and fail to mobilize into peripheral blood in vivo in response to CCL3. They also have accelerated mortality when challenged with Aspergillus fumigatus, a fungus controlled principally by neutrophil.</text>
</comment>
<comment type="similarity">
    <text evidence="3">Belongs to the G-protein coupled receptor 1 family.</text>
</comment>
<evidence type="ECO:0000250" key="1">
    <source>
        <dbReference type="UniProtKB" id="P32246"/>
    </source>
</evidence>
<evidence type="ECO:0000255" key="2"/>
<evidence type="ECO:0000255" key="3">
    <source>
        <dbReference type="PROSITE-ProRule" id="PRU00521"/>
    </source>
</evidence>
<evidence type="ECO:0000269" key="4">
    <source>
    </source>
</evidence>
<evidence type="ECO:0000269" key="5">
    <source>
    </source>
</evidence>
<evidence type="ECO:0000269" key="6">
    <source>
    </source>
</evidence>
<evidence type="ECO:0000305" key="7"/>
<proteinExistence type="evidence at transcript level"/>
<gene>
    <name type="primary">Ccr1</name>
    <name type="synonym">Cmkbr1</name>
</gene>
<dbReference type="EMBL" id="U29678">
    <property type="protein sequence ID" value="AAA86119.1"/>
    <property type="molecule type" value="mRNA"/>
</dbReference>
<dbReference type="EMBL" id="U28404">
    <property type="protein sequence ID" value="AAA89153.1"/>
    <property type="molecule type" value="Genomic_DNA"/>
</dbReference>
<dbReference type="EMBL" id="AK036597">
    <property type="protein sequence ID" value="BAC29500.1"/>
    <property type="molecule type" value="mRNA"/>
</dbReference>
<dbReference type="EMBL" id="AK036690">
    <property type="protein sequence ID" value="BAC29535.1"/>
    <property type="molecule type" value="mRNA"/>
</dbReference>
<dbReference type="EMBL" id="CH466671">
    <property type="protein sequence ID" value="EDL37173.1"/>
    <property type="molecule type" value="Genomic_DNA"/>
</dbReference>
<dbReference type="EMBL" id="BC011092">
    <property type="protein sequence ID" value="AAH11092.1"/>
    <property type="molecule type" value="mRNA"/>
</dbReference>
<dbReference type="CCDS" id="CCDS23666.1"/>
<dbReference type="PIR" id="I49339">
    <property type="entry name" value="I49339"/>
</dbReference>
<dbReference type="RefSeq" id="NP_034042.3">
    <property type="nucleotide sequence ID" value="NM_009912.4"/>
</dbReference>
<dbReference type="SMR" id="P51675"/>
<dbReference type="BioGRID" id="198768">
    <property type="interactions" value="1"/>
</dbReference>
<dbReference type="FunCoup" id="P51675">
    <property type="interactions" value="514"/>
</dbReference>
<dbReference type="STRING" id="10090.ENSMUSP00000026911"/>
<dbReference type="BindingDB" id="P51675"/>
<dbReference type="ChEMBL" id="CHEMBL3872"/>
<dbReference type="iPTMnet" id="P51675"/>
<dbReference type="PhosphoSitePlus" id="P51675"/>
<dbReference type="jPOST" id="P51675"/>
<dbReference type="PaxDb" id="10090-ENSMUSP00000026911"/>
<dbReference type="ProteomicsDB" id="279949"/>
<dbReference type="DNASU" id="12768"/>
<dbReference type="Ensembl" id="ENSMUST00000026911.6">
    <property type="protein sequence ID" value="ENSMUSP00000026911.5"/>
    <property type="gene ID" value="ENSMUSG00000025804.6"/>
</dbReference>
<dbReference type="GeneID" id="12768"/>
<dbReference type="KEGG" id="mmu:12768"/>
<dbReference type="UCSC" id="uc009sgy.2">
    <property type="organism name" value="mouse"/>
</dbReference>
<dbReference type="AGR" id="MGI:104618"/>
<dbReference type="CTD" id="1230"/>
<dbReference type="MGI" id="MGI:104618">
    <property type="gene designation" value="Ccr1"/>
</dbReference>
<dbReference type="VEuPathDB" id="HostDB:ENSMUSG00000025804"/>
<dbReference type="eggNOG" id="KOG3656">
    <property type="taxonomic scope" value="Eukaryota"/>
</dbReference>
<dbReference type="GeneTree" id="ENSGT01020000230359"/>
<dbReference type="HOGENOM" id="CLU_009579_8_3_1"/>
<dbReference type="InParanoid" id="P51675"/>
<dbReference type="OMA" id="GITPCQK"/>
<dbReference type="OrthoDB" id="5970631at2759"/>
<dbReference type="PhylomeDB" id="P51675"/>
<dbReference type="TreeFam" id="TF330966"/>
<dbReference type="Reactome" id="R-MMU-418594">
    <property type="pathway name" value="G alpha (i) signalling events"/>
</dbReference>
<dbReference type="BioGRID-ORCS" id="12768">
    <property type="hits" value="4 hits in 78 CRISPR screens"/>
</dbReference>
<dbReference type="PRO" id="PR:P51675"/>
<dbReference type="Proteomes" id="UP000000589">
    <property type="component" value="Chromosome 9"/>
</dbReference>
<dbReference type="RNAct" id="P51675">
    <property type="molecule type" value="protein"/>
</dbReference>
<dbReference type="Bgee" id="ENSMUSG00000025804">
    <property type="expression patterns" value="Expressed in granulocyte and 75 other cell types or tissues"/>
</dbReference>
<dbReference type="GO" id="GO:0043025">
    <property type="term" value="C:neuronal cell body"/>
    <property type="evidence" value="ECO:0007669"/>
    <property type="project" value="Ensembl"/>
</dbReference>
<dbReference type="GO" id="GO:0005886">
    <property type="term" value="C:plasma membrane"/>
    <property type="evidence" value="ECO:0000250"/>
    <property type="project" value="UniProtKB"/>
</dbReference>
<dbReference type="GO" id="GO:0019957">
    <property type="term" value="F:C-C chemokine binding"/>
    <property type="evidence" value="ECO:0007669"/>
    <property type="project" value="Ensembl"/>
</dbReference>
<dbReference type="GO" id="GO:0016493">
    <property type="term" value="F:C-C chemokine receptor activity"/>
    <property type="evidence" value="ECO:0000314"/>
    <property type="project" value="MGI"/>
</dbReference>
<dbReference type="GO" id="GO:0071560">
    <property type="term" value="P:cellular response to transforming growth factor beta stimulus"/>
    <property type="evidence" value="ECO:0007669"/>
    <property type="project" value="Ensembl"/>
</dbReference>
<dbReference type="GO" id="GO:0071356">
    <property type="term" value="P:cellular response to tumor necrosis factor"/>
    <property type="evidence" value="ECO:0007669"/>
    <property type="project" value="Ensembl"/>
</dbReference>
<dbReference type="GO" id="GO:0021549">
    <property type="term" value="P:cerebellum development"/>
    <property type="evidence" value="ECO:0007669"/>
    <property type="project" value="Ensembl"/>
</dbReference>
<dbReference type="GO" id="GO:0006955">
    <property type="term" value="P:immune response"/>
    <property type="evidence" value="ECO:0007669"/>
    <property type="project" value="InterPro"/>
</dbReference>
<dbReference type="GO" id="GO:0006954">
    <property type="term" value="P:inflammatory response"/>
    <property type="evidence" value="ECO:0000315"/>
    <property type="project" value="MGI"/>
</dbReference>
<dbReference type="GO" id="GO:0030595">
    <property type="term" value="P:leukocyte chemotaxis"/>
    <property type="evidence" value="ECO:0000314"/>
    <property type="project" value="MGI"/>
</dbReference>
<dbReference type="GO" id="GO:0030099">
    <property type="term" value="P:myeloid cell differentiation"/>
    <property type="evidence" value="ECO:0000315"/>
    <property type="project" value="MGI"/>
</dbReference>
<dbReference type="GO" id="GO:0045824">
    <property type="term" value="P:negative regulation of innate immune response"/>
    <property type="evidence" value="ECO:0000315"/>
    <property type="project" value="BHF-UCL"/>
</dbReference>
<dbReference type="GO" id="GO:0090026">
    <property type="term" value="P:positive regulation of monocyte chemotaxis"/>
    <property type="evidence" value="ECO:0000250"/>
    <property type="project" value="UniProtKB"/>
</dbReference>
<dbReference type="CDD" id="cd15183">
    <property type="entry name" value="7tmA_CCR1"/>
    <property type="match status" value="1"/>
</dbReference>
<dbReference type="FunFam" id="1.20.1070.10:FF:000026">
    <property type="entry name" value="C-C chemokine receptor type 5"/>
    <property type="match status" value="1"/>
</dbReference>
<dbReference type="Gene3D" id="1.20.1070.10">
    <property type="entry name" value="Rhodopsin 7-helix transmembrane proteins"/>
    <property type="match status" value="1"/>
</dbReference>
<dbReference type="InterPro" id="IPR050119">
    <property type="entry name" value="CCR1-9-like"/>
</dbReference>
<dbReference type="InterPro" id="IPR002236">
    <property type="entry name" value="Chemokine_CCR1"/>
</dbReference>
<dbReference type="InterPro" id="IPR000355">
    <property type="entry name" value="Chemokine_rcpt"/>
</dbReference>
<dbReference type="InterPro" id="IPR000276">
    <property type="entry name" value="GPCR_Rhodpsn"/>
</dbReference>
<dbReference type="InterPro" id="IPR017452">
    <property type="entry name" value="GPCR_Rhodpsn_7TM"/>
</dbReference>
<dbReference type="PANTHER" id="PTHR10489:SF711">
    <property type="entry name" value="C-C CHEMOKINE RECEPTOR TYPE 1"/>
    <property type="match status" value="1"/>
</dbReference>
<dbReference type="PANTHER" id="PTHR10489">
    <property type="entry name" value="CELL ADHESION MOLECULE"/>
    <property type="match status" value="1"/>
</dbReference>
<dbReference type="Pfam" id="PF00001">
    <property type="entry name" value="7tm_1"/>
    <property type="match status" value="1"/>
</dbReference>
<dbReference type="PRINTS" id="PR00657">
    <property type="entry name" value="CCCHEMOKINER"/>
</dbReference>
<dbReference type="PRINTS" id="PR01106">
    <property type="entry name" value="CHEMOKINER1"/>
</dbReference>
<dbReference type="PRINTS" id="PR00237">
    <property type="entry name" value="GPCRRHODOPSN"/>
</dbReference>
<dbReference type="SUPFAM" id="SSF81321">
    <property type="entry name" value="Family A G protein-coupled receptor-like"/>
    <property type="match status" value="1"/>
</dbReference>
<dbReference type="PROSITE" id="PS00237">
    <property type="entry name" value="G_PROTEIN_RECEP_F1_1"/>
    <property type="match status" value="1"/>
</dbReference>
<dbReference type="PROSITE" id="PS50262">
    <property type="entry name" value="G_PROTEIN_RECEP_F1_2"/>
    <property type="match status" value="1"/>
</dbReference>
<feature type="chain" id="PRO_0000069231" description="C-C chemokine receptor type 1">
    <location>
        <begin position="1"/>
        <end position="355"/>
    </location>
</feature>
<feature type="topological domain" description="Extracellular" evidence="2">
    <location>
        <begin position="1"/>
        <end position="34"/>
    </location>
</feature>
<feature type="transmembrane region" description="Helical; Name=1" evidence="2">
    <location>
        <begin position="35"/>
        <end position="60"/>
    </location>
</feature>
<feature type="topological domain" description="Cytoplasmic" evidence="2">
    <location>
        <begin position="61"/>
        <end position="64"/>
    </location>
</feature>
<feature type="transmembrane region" description="Helical; Name=2" evidence="2">
    <location>
        <begin position="65"/>
        <end position="91"/>
    </location>
</feature>
<feature type="topological domain" description="Extracellular" evidence="2">
    <location>
        <begin position="92"/>
        <end position="107"/>
    </location>
</feature>
<feature type="transmembrane region" description="Helical; Name=3" evidence="2">
    <location>
        <begin position="108"/>
        <end position="129"/>
    </location>
</feature>
<feature type="topological domain" description="Cytoplasmic" evidence="2">
    <location>
        <begin position="130"/>
        <end position="146"/>
    </location>
</feature>
<feature type="transmembrane region" description="Helical; Name=4" evidence="2">
    <location>
        <begin position="147"/>
        <end position="171"/>
    </location>
</feature>
<feature type="topological domain" description="Extracellular" evidence="2">
    <location>
        <begin position="172"/>
        <end position="197"/>
    </location>
</feature>
<feature type="transmembrane region" description="Helical; Name=5" evidence="2">
    <location>
        <begin position="198"/>
        <end position="223"/>
    </location>
</feature>
<feature type="topological domain" description="Cytoplasmic" evidence="2">
    <location>
        <begin position="224"/>
        <end position="239"/>
    </location>
</feature>
<feature type="transmembrane region" description="Helical; Name=6" evidence="2">
    <location>
        <begin position="240"/>
        <end position="264"/>
    </location>
</feature>
<feature type="topological domain" description="Extracellular" evidence="2">
    <location>
        <begin position="265"/>
        <end position="281"/>
    </location>
</feature>
<feature type="transmembrane region" description="Helical; Name=7" evidence="2">
    <location>
        <begin position="282"/>
        <end position="305"/>
    </location>
</feature>
<feature type="topological domain" description="Cytoplasmic" evidence="2">
    <location>
        <begin position="306"/>
        <end position="355"/>
    </location>
</feature>
<feature type="disulfide bond" evidence="3">
    <location>
        <begin position="106"/>
        <end position="183"/>
    </location>
</feature>
<feature type="sequence conflict" description="In Ref. 1; AAA86119." evidence="7" ref="1">
    <original>V</original>
    <variation>M</variation>
    <location>
        <position position="55"/>
    </location>
</feature>
<feature type="sequence conflict" description="In Ref. 1; AAA86119 and 2; AAA89153." evidence="7" ref="1 2">
    <original>F</original>
    <variation>L</variation>
    <location>
        <position position="149"/>
    </location>
</feature>
<feature type="sequence conflict" description="In Ref. 1; AAA86119 and 2; AAA89153." evidence="7" ref="1 2">
    <original>Q</original>
    <variation>H</variation>
    <location>
        <position position="278"/>
    </location>
</feature>
<reference key="1">
    <citation type="journal article" date="1995" name="J. Immunol.">
        <title>Molecular characterization of two murine eosinophil beta chemokine receptors.</title>
        <authorList>
            <person name="Post T.W."/>
            <person name="Bozic C.R."/>
            <person name="Rothenberg M.E."/>
            <person name="Luster A.D."/>
            <person name="Gerard N."/>
            <person name="Gerard C."/>
        </authorList>
    </citation>
    <scope>NUCLEOTIDE SEQUENCE [MRNA]</scope>
    <source>
        <strain>129/Sv</strain>
        <tissue>Peritoneal macrophage</tissue>
    </source>
</reference>
<reference key="2">
    <citation type="journal article" date="1995" name="J. Biol. Chem.">
        <title>Cloning and differential tissue-specific expression of three mouse beta chemokine receptor-like genes, including the gene for a functional macrophage inflammatory protein-1 alpha receptor.</title>
        <authorList>
            <person name="Gao J.-L."/>
            <person name="Murphy P.M."/>
        </authorList>
    </citation>
    <scope>NUCLEOTIDE SEQUENCE [GENOMIC DNA]</scope>
    <source>
        <strain>129/SvJ</strain>
    </source>
</reference>
<reference key="3">
    <citation type="journal article" date="2005" name="Science">
        <title>The transcriptional landscape of the mammalian genome.</title>
        <authorList>
            <person name="Carninci P."/>
            <person name="Kasukawa T."/>
            <person name="Katayama S."/>
            <person name="Gough J."/>
            <person name="Frith M.C."/>
            <person name="Maeda N."/>
            <person name="Oyama R."/>
            <person name="Ravasi T."/>
            <person name="Lenhard B."/>
            <person name="Wells C."/>
            <person name="Kodzius R."/>
            <person name="Shimokawa K."/>
            <person name="Bajic V.B."/>
            <person name="Brenner S.E."/>
            <person name="Batalov S."/>
            <person name="Forrest A.R."/>
            <person name="Zavolan M."/>
            <person name="Davis M.J."/>
            <person name="Wilming L.G."/>
            <person name="Aidinis V."/>
            <person name="Allen J.E."/>
            <person name="Ambesi-Impiombato A."/>
            <person name="Apweiler R."/>
            <person name="Aturaliya R.N."/>
            <person name="Bailey T.L."/>
            <person name="Bansal M."/>
            <person name="Baxter L."/>
            <person name="Beisel K.W."/>
            <person name="Bersano T."/>
            <person name="Bono H."/>
            <person name="Chalk A.M."/>
            <person name="Chiu K.P."/>
            <person name="Choudhary V."/>
            <person name="Christoffels A."/>
            <person name="Clutterbuck D.R."/>
            <person name="Crowe M.L."/>
            <person name="Dalla E."/>
            <person name="Dalrymple B.P."/>
            <person name="de Bono B."/>
            <person name="Della Gatta G."/>
            <person name="di Bernardo D."/>
            <person name="Down T."/>
            <person name="Engstrom P."/>
            <person name="Fagiolini M."/>
            <person name="Faulkner G."/>
            <person name="Fletcher C.F."/>
            <person name="Fukushima T."/>
            <person name="Furuno M."/>
            <person name="Futaki S."/>
            <person name="Gariboldi M."/>
            <person name="Georgii-Hemming P."/>
            <person name="Gingeras T.R."/>
            <person name="Gojobori T."/>
            <person name="Green R.E."/>
            <person name="Gustincich S."/>
            <person name="Harbers M."/>
            <person name="Hayashi Y."/>
            <person name="Hensch T.K."/>
            <person name="Hirokawa N."/>
            <person name="Hill D."/>
            <person name="Huminiecki L."/>
            <person name="Iacono M."/>
            <person name="Ikeo K."/>
            <person name="Iwama A."/>
            <person name="Ishikawa T."/>
            <person name="Jakt M."/>
            <person name="Kanapin A."/>
            <person name="Katoh M."/>
            <person name="Kawasawa Y."/>
            <person name="Kelso J."/>
            <person name="Kitamura H."/>
            <person name="Kitano H."/>
            <person name="Kollias G."/>
            <person name="Krishnan S.P."/>
            <person name="Kruger A."/>
            <person name="Kummerfeld S.K."/>
            <person name="Kurochkin I.V."/>
            <person name="Lareau L.F."/>
            <person name="Lazarevic D."/>
            <person name="Lipovich L."/>
            <person name="Liu J."/>
            <person name="Liuni S."/>
            <person name="McWilliam S."/>
            <person name="Madan Babu M."/>
            <person name="Madera M."/>
            <person name="Marchionni L."/>
            <person name="Matsuda H."/>
            <person name="Matsuzawa S."/>
            <person name="Miki H."/>
            <person name="Mignone F."/>
            <person name="Miyake S."/>
            <person name="Morris K."/>
            <person name="Mottagui-Tabar S."/>
            <person name="Mulder N."/>
            <person name="Nakano N."/>
            <person name="Nakauchi H."/>
            <person name="Ng P."/>
            <person name="Nilsson R."/>
            <person name="Nishiguchi S."/>
            <person name="Nishikawa S."/>
            <person name="Nori F."/>
            <person name="Ohara O."/>
            <person name="Okazaki Y."/>
            <person name="Orlando V."/>
            <person name="Pang K.C."/>
            <person name="Pavan W.J."/>
            <person name="Pavesi G."/>
            <person name="Pesole G."/>
            <person name="Petrovsky N."/>
            <person name="Piazza S."/>
            <person name="Reed J."/>
            <person name="Reid J.F."/>
            <person name="Ring B.Z."/>
            <person name="Ringwald M."/>
            <person name="Rost B."/>
            <person name="Ruan Y."/>
            <person name="Salzberg S.L."/>
            <person name="Sandelin A."/>
            <person name="Schneider C."/>
            <person name="Schoenbach C."/>
            <person name="Sekiguchi K."/>
            <person name="Semple C.A."/>
            <person name="Seno S."/>
            <person name="Sessa L."/>
            <person name="Sheng Y."/>
            <person name="Shibata Y."/>
            <person name="Shimada H."/>
            <person name="Shimada K."/>
            <person name="Silva D."/>
            <person name="Sinclair B."/>
            <person name="Sperling S."/>
            <person name="Stupka E."/>
            <person name="Sugiura K."/>
            <person name="Sultana R."/>
            <person name="Takenaka Y."/>
            <person name="Taki K."/>
            <person name="Tammoja K."/>
            <person name="Tan S.L."/>
            <person name="Tang S."/>
            <person name="Taylor M.S."/>
            <person name="Tegner J."/>
            <person name="Teichmann S.A."/>
            <person name="Ueda H.R."/>
            <person name="van Nimwegen E."/>
            <person name="Verardo R."/>
            <person name="Wei C.L."/>
            <person name="Yagi K."/>
            <person name="Yamanishi H."/>
            <person name="Zabarovsky E."/>
            <person name="Zhu S."/>
            <person name="Zimmer A."/>
            <person name="Hide W."/>
            <person name="Bult C."/>
            <person name="Grimmond S.M."/>
            <person name="Teasdale R.D."/>
            <person name="Liu E.T."/>
            <person name="Brusic V."/>
            <person name="Quackenbush J."/>
            <person name="Wahlestedt C."/>
            <person name="Mattick J.S."/>
            <person name="Hume D.A."/>
            <person name="Kai C."/>
            <person name="Sasaki D."/>
            <person name="Tomaru Y."/>
            <person name="Fukuda S."/>
            <person name="Kanamori-Katayama M."/>
            <person name="Suzuki M."/>
            <person name="Aoki J."/>
            <person name="Arakawa T."/>
            <person name="Iida J."/>
            <person name="Imamura K."/>
            <person name="Itoh M."/>
            <person name="Kato T."/>
            <person name="Kawaji H."/>
            <person name="Kawagashira N."/>
            <person name="Kawashima T."/>
            <person name="Kojima M."/>
            <person name="Kondo S."/>
            <person name="Konno H."/>
            <person name="Nakano K."/>
            <person name="Ninomiya N."/>
            <person name="Nishio T."/>
            <person name="Okada M."/>
            <person name="Plessy C."/>
            <person name="Shibata K."/>
            <person name="Shiraki T."/>
            <person name="Suzuki S."/>
            <person name="Tagami M."/>
            <person name="Waki K."/>
            <person name="Watahiki A."/>
            <person name="Okamura-Oho Y."/>
            <person name="Suzuki H."/>
            <person name="Kawai J."/>
            <person name="Hayashizaki Y."/>
        </authorList>
    </citation>
    <scope>NUCLEOTIDE SEQUENCE [LARGE SCALE MRNA]</scope>
    <source>
        <strain>C57BL/6J</strain>
        <tissue>Bone</tissue>
    </source>
</reference>
<reference key="4">
    <citation type="submission" date="2005-09" db="EMBL/GenBank/DDBJ databases">
        <authorList>
            <person name="Mural R.J."/>
            <person name="Adams M.D."/>
            <person name="Myers E.W."/>
            <person name="Smith H.O."/>
            <person name="Venter J.C."/>
        </authorList>
    </citation>
    <scope>NUCLEOTIDE SEQUENCE [LARGE SCALE GENOMIC DNA]</scope>
</reference>
<reference key="5">
    <citation type="journal article" date="2004" name="Genome Res.">
        <title>The status, quality, and expansion of the NIH full-length cDNA project: the Mammalian Gene Collection (MGC).</title>
        <authorList>
            <consortium name="The MGC Project Team"/>
        </authorList>
    </citation>
    <scope>NUCLEOTIDE SEQUENCE [LARGE SCALE MRNA]</scope>
    <source>
        <tissue>Mammary gland</tissue>
    </source>
</reference>
<reference key="6">
    <citation type="journal article" date="1997" name="J. Exp. Med.">
        <title>Impaired host defense, hematopoiesis, granulomatous inflammation and type 1-type 2 cytokine balance in mice lacking CC chemokine receptor 1.</title>
        <authorList>
            <person name="Gao J.L."/>
            <person name="Wynn T.A."/>
            <person name="Chang Y."/>
            <person name="Lee E.J."/>
            <person name="Broxmeyer H.E."/>
            <person name="Cooper S."/>
            <person name="Tiffany H.L."/>
            <person name="Westphal H."/>
            <person name="Kwon-Chung J."/>
            <person name="Murphy P.M."/>
        </authorList>
    </citation>
    <scope>FUNCTION</scope>
    <scope>DISRUPTION PHENOTYPE</scope>
</reference>
<reference key="7">
    <citation type="journal article" date="2005" name="J. Leukoc. Biol.">
        <title>MIP-1alpha[CCL3] acting on the CCR1 receptor mediates neutrophil migration in immune inflammation via sequential release of TNF-alpha and LTB4.</title>
        <authorList>
            <person name="Ramos C.D."/>
            <person name="Canetti C."/>
            <person name="Souto J.T."/>
            <person name="Silva J.S."/>
            <person name="Hogaboam C.M."/>
            <person name="Ferreira S.H."/>
            <person name="Cunha F.Q."/>
        </authorList>
    </citation>
    <scope>FUNCTION</scope>
</reference>
<reference key="8">
    <citation type="journal article" date="2020" name="Neurotherapeutics">
        <title>CCR1 Activation Promotes Neuroinflammation Through CCR1/TPR1/ERK1/2 Signaling Pathway After Intracerebral Hemorrhage in Mice.</title>
        <authorList>
            <person name="Yan J."/>
            <person name="Zuo G."/>
            <person name="Sherchan P."/>
            <person name="Huang L."/>
            <person name="Ocak U."/>
            <person name="Xu W."/>
            <person name="Travis Z.D."/>
            <person name="Wang W."/>
            <person name="Zhang J.H."/>
            <person name="Tang J."/>
        </authorList>
    </citation>
    <scope>FUNCTION</scope>
</reference>
<accession>P51675</accession>
<accession>Q6ZWR7</accession>
<accession>Q91VP9</accession>